<evidence type="ECO:0000255" key="1">
    <source>
        <dbReference type="HAMAP-Rule" id="MF_00183"/>
    </source>
</evidence>
<name>DXR_MYCBO</name>
<dbReference type="EC" id="1.1.1.267" evidence="1"/>
<dbReference type="EMBL" id="LT708304">
    <property type="protein sequence ID" value="SIU01516.1"/>
    <property type="molecule type" value="Genomic_DNA"/>
</dbReference>
<dbReference type="RefSeq" id="NP_856540.1">
    <property type="nucleotide sequence ID" value="NC_002945.3"/>
</dbReference>
<dbReference type="RefSeq" id="WP_003414613.1">
    <property type="nucleotide sequence ID" value="NC_002945.4"/>
</dbReference>
<dbReference type="SMR" id="P64013"/>
<dbReference type="GeneID" id="45426858"/>
<dbReference type="KEGG" id="mbo:BQ2027_MB2895C"/>
<dbReference type="PATRIC" id="fig|233413.5.peg.3177"/>
<dbReference type="UniPathway" id="UPA00056">
    <property type="reaction ID" value="UER00092"/>
</dbReference>
<dbReference type="Proteomes" id="UP000001419">
    <property type="component" value="Chromosome"/>
</dbReference>
<dbReference type="GO" id="GO:0030604">
    <property type="term" value="F:1-deoxy-D-xylulose-5-phosphate reductoisomerase activity"/>
    <property type="evidence" value="ECO:0007669"/>
    <property type="project" value="UniProtKB-UniRule"/>
</dbReference>
<dbReference type="GO" id="GO:0030145">
    <property type="term" value="F:manganese ion binding"/>
    <property type="evidence" value="ECO:0007669"/>
    <property type="project" value="TreeGrafter"/>
</dbReference>
<dbReference type="GO" id="GO:0070402">
    <property type="term" value="F:NADPH binding"/>
    <property type="evidence" value="ECO:0007669"/>
    <property type="project" value="InterPro"/>
</dbReference>
<dbReference type="GO" id="GO:0051484">
    <property type="term" value="P:isopentenyl diphosphate biosynthetic process, methylerythritol 4-phosphate pathway involved in terpenoid biosynthetic process"/>
    <property type="evidence" value="ECO:0007669"/>
    <property type="project" value="TreeGrafter"/>
</dbReference>
<dbReference type="FunFam" id="1.10.1740.10:FF:000024">
    <property type="entry name" value="1-deoxy-D-xylulose 5-phosphate reductoisomerase"/>
    <property type="match status" value="1"/>
</dbReference>
<dbReference type="FunFam" id="3.40.50.720:FF:000045">
    <property type="entry name" value="1-deoxy-D-xylulose 5-phosphate reductoisomerase"/>
    <property type="match status" value="1"/>
</dbReference>
<dbReference type="Gene3D" id="1.10.1740.10">
    <property type="match status" value="1"/>
</dbReference>
<dbReference type="Gene3D" id="3.40.50.720">
    <property type="entry name" value="NAD(P)-binding Rossmann-like Domain"/>
    <property type="match status" value="1"/>
</dbReference>
<dbReference type="HAMAP" id="MF_00183">
    <property type="entry name" value="DXP_reductoisom"/>
    <property type="match status" value="1"/>
</dbReference>
<dbReference type="InterPro" id="IPR003821">
    <property type="entry name" value="DXP_reductoisomerase"/>
</dbReference>
<dbReference type="InterPro" id="IPR013644">
    <property type="entry name" value="DXP_reductoisomerase_C"/>
</dbReference>
<dbReference type="InterPro" id="IPR013512">
    <property type="entry name" value="DXP_reductoisomerase_N"/>
</dbReference>
<dbReference type="InterPro" id="IPR026877">
    <property type="entry name" value="DXPR_C"/>
</dbReference>
<dbReference type="InterPro" id="IPR036169">
    <property type="entry name" value="DXPR_C_sf"/>
</dbReference>
<dbReference type="InterPro" id="IPR036291">
    <property type="entry name" value="NAD(P)-bd_dom_sf"/>
</dbReference>
<dbReference type="NCBIfam" id="TIGR00243">
    <property type="entry name" value="Dxr"/>
    <property type="match status" value="1"/>
</dbReference>
<dbReference type="PANTHER" id="PTHR30525">
    <property type="entry name" value="1-DEOXY-D-XYLULOSE 5-PHOSPHATE REDUCTOISOMERASE"/>
    <property type="match status" value="1"/>
</dbReference>
<dbReference type="PANTHER" id="PTHR30525:SF0">
    <property type="entry name" value="1-DEOXY-D-XYLULOSE 5-PHOSPHATE REDUCTOISOMERASE, CHLOROPLASTIC"/>
    <property type="match status" value="1"/>
</dbReference>
<dbReference type="Pfam" id="PF08436">
    <property type="entry name" value="DXP_redisom_C"/>
    <property type="match status" value="1"/>
</dbReference>
<dbReference type="Pfam" id="PF02670">
    <property type="entry name" value="DXP_reductoisom"/>
    <property type="match status" value="1"/>
</dbReference>
<dbReference type="Pfam" id="PF13288">
    <property type="entry name" value="DXPR_C"/>
    <property type="match status" value="1"/>
</dbReference>
<dbReference type="PIRSF" id="PIRSF006205">
    <property type="entry name" value="Dxp_reductismrs"/>
    <property type="match status" value="1"/>
</dbReference>
<dbReference type="SUPFAM" id="SSF69055">
    <property type="entry name" value="1-deoxy-D-xylulose-5-phosphate reductoisomerase, C-terminal domain"/>
    <property type="match status" value="1"/>
</dbReference>
<dbReference type="SUPFAM" id="SSF55347">
    <property type="entry name" value="Glyceraldehyde-3-phosphate dehydrogenase-like, C-terminal domain"/>
    <property type="match status" value="1"/>
</dbReference>
<dbReference type="SUPFAM" id="SSF51735">
    <property type="entry name" value="NAD(P)-binding Rossmann-fold domains"/>
    <property type="match status" value="1"/>
</dbReference>
<gene>
    <name evidence="1" type="primary">dxr</name>
    <name type="ordered locus">BQ2027_MB2895C</name>
</gene>
<feature type="chain" id="PRO_0000163675" description="1-deoxy-D-xylulose 5-phosphate reductoisomerase">
    <location>
        <begin position="1"/>
        <end position="413"/>
    </location>
</feature>
<feature type="binding site" evidence="1">
    <location>
        <position position="21"/>
    </location>
    <ligand>
        <name>NADPH</name>
        <dbReference type="ChEBI" id="CHEBI:57783"/>
    </ligand>
</feature>
<feature type="binding site" evidence="1">
    <location>
        <position position="22"/>
    </location>
    <ligand>
        <name>NADPH</name>
        <dbReference type="ChEBI" id="CHEBI:57783"/>
    </ligand>
</feature>
<feature type="binding site" evidence="1">
    <location>
        <position position="23"/>
    </location>
    <ligand>
        <name>NADPH</name>
        <dbReference type="ChEBI" id="CHEBI:57783"/>
    </ligand>
</feature>
<feature type="binding site" evidence="1">
    <location>
        <position position="24"/>
    </location>
    <ligand>
        <name>NADPH</name>
        <dbReference type="ChEBI" id="CHEBI:57783"/>
    </ligand>
</feature>
<feature type="binding site" evidence="1">
    <location>
        <position position="47"/>
    </location>
    <ligand>
        <name>NADPH</name>
        <dbReference type="ChEBI" id="CHEBI:57783"/>
    </ligand>
</feature>
<feature type="binding site" evidence="1">
    <location>
        <position position="127"/>
    </location>
    <ligand>
        <name>NADPH</name>
        <dbReference type="ChEBI" id="CHEBI:57783"/>
    </ligand>
</feature>
<feature type="binding site" evidence="1">
    <location>
        <position position="128"/>
    </location>
    <ligand>
        <name>1-deoxy-D-xylulose 5-phosphate</name>
        <dbReference type="ChEBI" id="CHEBI:57792"/>
    </ligand>
</feature>
<feature type="binding site" evidence="1">
    <location>
        <position position="129"/>
    </location>
    <ligand>
        <name>NADPH</name>
        <dbReference type="ChEBI" id="CHEBI:57783"/>
    </ligand>
</feature>
<feature type="binding site" evidence="1">
    <location>
        <position position="151"/>
    </location>
    <ligand>
        <name>Mn(2+)</name>
        <dbReference type="ChEBI" id="CHEBI:29035"/>
    </ligand>
</feature>
<feature type="binding site" evidence="1">
    <location>
        <position position="152"/>
    </location>
    <ligand>
        <name>1-deoxy-D-xylulose 5-phosphate</name>
        <dbReference type="ChEBI" id="CHEBI:57792"/>
    </ligand>
</feature>
<feature type="binding site" evidence="1">
    <location>
        <position position="153"/>
    </location>
    <ligand>
        <name>1-deoxy-D-xylulose 5-phosphate</name>
        <dbReference type="ChEBI" id="CHEBI:57792"/>
    </ligand>
</feature>
<feature type="binding site" evidence="1">
    <location>
        <position position="153"/>
    </location>
    <ligand>
        <name>Mn(2+)</name>
        <dbReference type="ChEBI" id="CHEBI:29035"/>
    </ligand>
</feature>
<feature type="binding site" evidence="1">
    <location>
        <position position="177"/>
    </location>
    <ligand>
        <name>1-deoxy-D-xylulose 5-phosphate</name>
        <dbReference type="ChEBI" id="CHEBI:57792"/>
    </ligand>
</feature>
<feature type="binding site" evidence="1">
    <location>
        <position position="200"/>
    </location>
    <ligand>
        <name>1-deoxy-D-xylulose 5-phosphate</name>
        <dbReference type="ChEBI" id="CHEBI:57792"/>
    </ligand>
</feature>
<feature type="binding site" evidence="1">
    <location>
        <position position="206"/>
    </location>
    <ligand>
        <name>NADPH</name>
        <dbReference type="ChEBI" id="CHEBI:57783"/>
    </ligand>
</feature>
<feature type="binding site" evidence="1">
    <location>
        <position position="213"/>
    </location>
    <ligand>
        <name>1-deoxy-D-xylulose 5-phosphate</name>
        <dbReference type="ChEBI" id="CHEBI:57792"/>
    </ligand>
</feature>
<feature type="binding site" evidence="1">
    <location>
        <position position="218"/>
    </location>
    <ligand>
        <name>1-deoxy-D-xylulose 5-phosphate</name>
        <dbReference type="ChEBI" id="CHEBI:57792"/>
    </ligand>
</feature>
<feature type="binding site" evidence="1">
    <location>
        <position position="219"/>
    </location>
    <ligand>
        <name>1-deoxy-D-xylulose 5-phosphate</name>
        <dbReference type="ChEBI" id="CHEBI:57792"/>
    </ligand>
</feature>
<feature type="binding site" evidence="1">
    <location>
        <position position="222"/>
    </location>
    <ligand>
        <name>1-deoxy-D-xylulose 5-phosphate</name>
        <dbReference type="ChEBI" id="CHEBI:57792"/>
    </ligand>
</feature>
<feature type="binding site" evidence="1">
    <location>
        <position position="222"/>
    </location>
    <ligand>
        <name>Mn(2+)</name>
        <dbReference type="ChEBI" id="CHEBI:29035"/>
    </ligand>
</feature>
<reference key="1">
    <citation type="journal article" date="2003" name="Proc. Natl. Acad. Sci. U.S.A.">
        <title>The complete genome sequence of Mycobacterium bovis.</title>
        <authorList>
            <person name="Garnier T."/>
            <person name="Eiglmeier K."/>
            <person name="Camus J.-C."/>
            <person name="Medina N."/>
            <person name="Mansoor H."/>
            <person name="Pryor M."/>
            <person name="Duthoy S."/>
            <person name="Grondin S."/>
            <person name="Lacroix C."/>
            <person name="Monsempe C."/>
            <person name="Simon S."/>
            <person name="Harris B."/>
            <person name="Atkin R."/>
            <person name="Doggett J."/>
            <person name="Mayes R."/>
            <person name="Keating L."/>
            <person name="Wheeler P.R."/>
            <person name="Parkhill J."/>
            <person name="Barrell B.G."/>
            <person name="Cole S.T."/>
            <person name="Gordon S.V."/>
            <person name="Hewinson R.G."/>
        </authorList>
    </citation>
    <scope>NUCLEOTIDE SEQUENCE [LARGE SCALE GENOMIC DNA]</scope>
    <source>
        <strain>ATCC BAA-935 / AF2122/97</strain>
    </source>
</reference>
<reference key="2">
    <citation type="journal article" date="2017" name="Genome Announc.">
        <title>Updated reference genome sequence and annotation of Mycobacterium bovis AF2122/97.</title>
        <authorList>
            <person name="Malone K.M."/>
            <person name="Farrell D."/>
            <person name="Stuber T.P."/>
            <person name="Schubert O.T."/>
            <person name="Aebersold R."/>
            <person name="Robbe-Austerman S."/>
            <person name="Gordon S.V."/>
        </authorList>
    </citation>
    <scope>NUCLEOTIDE SEQUENCE [LARGE SCALE GENOMIC DNA]</scope>
    <scope>GENOME REANNOTATION</scope>
    <source>
        <strain>ATCC BAA-935 / AF2122/97</strain>
    </source>
</reference>
<protein>
    <recommendedName>
        <fullName evidence="1">1-deoxy-D-xylulose 5-phosphate reductoisomerase</fullName>
        <shortName evidence="1">DXP reductoisomerase</shortName>
        <ecNumber evidence="1">1.1.1.267</ecNumber>
    </recommendedName>
    <alternativeName>
        <fullName evidence="1">1-deoxyxylulose-5-phosphate reductoisomerase</fullName>
    </alternativeName>
    <alternativeName>
        <fullName evidence="1">2-C-methyl-D-erythritol 4-phosphate synthase</fullName>
    </alternativeName>
</protein>
<keyword id="KW-0414">Isoprene biosynthesis</keyword>
<keyword id="KW-0464">Manganese</keyword>
<keyword id="KW-0479">Metal-binding</keyword>
<keyword id="KW-0521">NADP</keyword>
<keyword id="KW-0560">Oxidoreductase</keyword>
<keyword id="KW-1185">Reference proteome</keyword>
<sequence length="413" mass="42853">MTNSTDGRADGRLRVVVLGSTGSIGTQALQVIADNPDRFEVVGLAAGGAHLDTLLRQRAQTGVTNIAVADEHAAQRVGDIPYHGSDAATRLVEQTEADVVLNALVGALGLRPTLAALKTGARLALANKESLVAGGSLVLRAARPGQIVPVDSEHSALAQCLRGGTPDEVAKLVLTASGGPFRGWSAADLEHVTPEQAGAHPTWSMGPMNTLNSASLVNKGLEVIETHLLFGIPYDRIDVVVHPQSIIHSMVTFIDGSTIAQASPPDMKLPISLALGWPRRVSGAAAACDFHTASSWEFEPLDTDVFPAVELARQAGVAGGCMTAVYNAANEEAAAAFLAGRIGFPAIVGIIADVLHAADQWAVEPATVDDVLDAQRWARERAQRAVSGMASVAIASTAKPGAAGRHASTLERS</sequence>
<proteinExistence type="inferred from homology"/>
<comment type="function">
    <text evidence="1">Catalyzes the NADPH-dependent rearrangement and reduction of 1-deoxy-D-xylulose-5-phosphate (DXP) to 2-C-methyl-D-erythritol 4-phosphate (MEP).</text>
</comment>
<comment type="catalytic activity">
    <reaction evidence="1">
        <text>2-C-methyl-D-erythritol 4-phosphate + NADP(+) = 1-deoxy-D-xylulose 5-phosphate + NADPH + H(+)</text>
        <dbReference type="Rhea" id="RHEA:13717"/>
        <dbReference type="ChEBI" id="CHEBI:15378"/>
        <dbReference type="ChEBI" id="CHEBI:57783"/>
        <dbReference type="ChEBI" id="CHEBI:57792"/>
        <dbReference type="ChEBI" id="CHEBI:58262"/>
        <dbReference type="ChEBI" id="CHEBI:58349"/>
        <dbReference type="EC" id="1.1.1.267"/>
    </reaction>
    <physiologicalReaction direction="right-to-left" evidence="1">
        <dbReference type="Rhea" id="RHEA:13719"/>
    </physiologicalReaction>
</comment>
<comment type="cofactor">
    <cofactor evidence="1">
        <name>Mg(2+)</name>
        <dbReference type="ChEBI" id="CHEBI:18420"/>
    </cofactor>
    <cofactor evidence="1">
        <name>Mn(2+)</name>
        <dbReference type="ChEBI" id="CHEBI:29035"/>
    </cofactor>
</comment>
<comment type="pathway">
    <text evidence="1">Isoprenoid biosynthesis; isopentenyl diphosphate biosynthesis via DXP pathway; isopentenyl diphosphate from 1-deoxy-D-xylulose 5-phosphate: step 1/6.</text>
</comment>
<comment type="similarity">
    <text evidence="1">Belongs to the DXR family.</text>
</comment>
<organism>
    <name type="scientific">Mycobacterium bovis (strain ATCC BAA-935 / AF2122/97)</name>
    <dbReference type="NCBI Taxonomy" id="233413"/>
    <lineage>
        <taxon>Bacteria</taxon>
        <taxon>Bacillati</taxon>
        <taxon>Actinomycetota</taxon>
        <taxon>Actinomycetes</taxon>
        <taxon>Mycobacteriales</taxon>
        <taxon>Mycobacteriaceae</taxon>
        <taxon>Mycobacterium</taxon>
        <taxon>Mycobacterium tuberculosis complex</taxon>
    </lineage>
</organism>
<accession>P64013</accession>
<accession>A0A1R3Y387</accession>
<accession>Q10798</accession>
<accession>X2BLS9</accession>